<dbReference type="EMBL" id="AF539549">
    <property type="protein sequence ID" value="AAN10133.1"/>
    <property type="molecule type" value="mRNA"/>
</dbReference>
<dbReference type="RefSeq" id="NP_001009060.1">
    <property type="nucleotide sequence ID" value="NM_001009060.1"/>
</dbReference>
<dbReference type="RefSeq" id="XP_016775242.1">
    <property type="nucleotide sequence ID" value="XM_016919753.1"/>
</dbReference>
<dbReference type="RefSeq" id="XP_016775243.1">
    <property type="nucleotide sequence ID" value="XM_016919754.1"/>
</dbReference>
<dbReference type="RefSeq" id="XP_016775244.1">
    <property type="nucleotide sequence ID" value="XM_016919755.1"/>
</dbReference>
<dbReference type="RefSeq" id="XP_016775245.1">
    <property type="nucleotide sequence ID" value="XM_016919756.1"/>
</dbReference>
<dbReference type="RefSeq" id="XP_016775246.1">
    <property type="nucleotide sequence ID" value="XM_016919757.1"/>
</dbReference>
<dbReference type="RefSeq" id="XP_016775247.1">
    <property type="nucleotide sequence ID" value="XM_016919758.3"/>
</dbReference>
<dbReference type="RefSeq" id="XP_016775248.1">
    <property type="nucleotide sequence ID" value="XM_016919759.3"/>
</dbReference>
<dbReference type="RefSeq" id="XP_016775249.1">
    <property type="nucleotide sequence ID" value="XM_016919760.4"/>
</dbReference>
<dbReference type="RefSeq" id="XP_016775250.1">
    <property type="nucleotide sequence ID" value="XM_016919761.4"/>
</dbReference>
<dbReference type="RefSeq" id="XP_063638502.1">
    <property type="nucleotide sequence ID" value="XM_063782432.1"/>
</dbReference>
<dbReference type="RefSeq" id="XP_063638503.1">
    <property type="nucleotide sequence ID" value="XM_063782433.1"/>
</dbReference>
<dbReference type="RefSeq" id="XP_063638504.1">
    <property type="nucleotide sequence ID" value="XM_063782434.1"/>
</dbReference>
<dbReference type="RefSeq" id="XP_063638505.1">
    <property type="nucleotide sequence ID" value="XM_063782435.1"/>
</dbReference>
<dbReference type="RefSeq" id="XP_063638506.1">
    <property type="nucleotide sequence ID" value="XM_063782436.1"/>
</dbReference>
<dbReference type="RefSeq" id="XP_063638507.1">
    <property type="nucleotide sequence ID" value="XM_063782437.1"/>
</dbReference>
<dbReference type="SMR" id="Q8HZP9"/>
<dbReference type="FunCoup" id="Q8HZP9">
    <property type="interactions" value="500"/>
</dbReference>
<dbReference type="STRING" id="9598.ENSPTRP00000069850"/>
<dbReference type="PaxDb" id="9598-ENSPTRP00000054947"/>
<dbReference type="Ensembl" id="ENSPTRT00000062390.4">
    <property type="protein sequence ID" value="ENSPTRP00000054947.4"/>
    <property type="gene ID" value="ENSPTRG00000003118.7"/>
</dbReference>
<dbReference type="Ensembl" id="ENSPTRT00000097661.1">
    <property type="protein sequence ID" value="ENSPTRP00000069850.1"/>
    <property type="gene ID" value="ENSPTRG00000003118.7"/>
</dbReference>
<dbReference type="GeneID" id="450154"/>
<dbReference type="KEGG" id="ptr:450154"/>
<dbReference type="CTD" id="6050"/>
<dbReference type="eggNOG" id="KOG4308">
    <property type="taxonomic scope" value="Eukaryota"/>
</dbReference>
<dbReference type="GeneTree" id="ENSGT00940000161492"/>
<dbReference type="InParanoid" id="Q8HZP9"/>
<dbReference type="OMA" id="CQLECLW"/>
<dbReference type="OrthoDB" id="5084at9604"/>
<dbReference type="Proteomes" id="UP000002277">
    <property type="component" value="Chromosome 11"/>
</dbReference>
<dbReference type="Bgee" id="ENSPTRG00000003118">
    <property type="expression patterns" value="Expressed in dorsolateral prefrontal cortex and 22 other cell types or tissues"/>
</dbReference>
<dbReference type="GO" id="GO:0032311">
    <property type="term" value="C:angiogenin-PRI complex"/>
    <property type="evidence" value="ECO:0000318"/>
    <property type="project" value="GO_Central"/>
</dbReference>
<dbReference type="GO" id="GO:0005737">
    <property type="term" value="C:cytoplasm"/>
    <property type="evidence" value="ECO:0000250"/>
    <property type="project" value="UniProtKB"/>
</dbReference>
<dbReference type="GO" id="GO:0005829">
    <property type="term" value="C:cytosol"/>
    <property type="evidence" value="ECO:0007669"/>
    <property type="project" value="Ensembl"/>
</dbReference>
<dbReference type="GO" id="GO:0030027">
    <property type="term" value="C:lamellipodium"/>
    <property type="evidence" value="ECO:0000318"/>
    <property type="project" value="GO_Central"/>
</dbReference>
<dbReference type="GO" id="GO:0005654">
    <property type="term" value="C:nucleoplasm"/>
    <property type="evidence" value="ECO:0000318"/>
    <property type="project" value="GO_Central"/>
</dbReference>
<dbReference type="GO" id="GO:0005634">
    <property type="term" value="C:nucleus"/>
    <property type="evidence" value="ECO:0000250"/>
    <property type="project" value="UniProtKB"/>
</dbReference>
<dbReference type="GO" id="GO:0005886">
    <property type="term" value="C:plasma membrane"/>
    <property type="evidence" value="ECO:0000318"/>
    <property type="project" value="GO_Central"/>
</dbReference>
<dbReference type="GO" id="GO:0008428">
    <property type="term" value="F:ribonuclease inhibitor activity"/>
    <property type="evidence" value="ECO:0000250"/>
    <property type="project" value="UniProtKB"/>
</dbReference>
<dbReference type="GO" id="GO:0016477">
    <property type="term" value="P:cell migration"/>
    <property type="evidence" value="ECO:0000318"/>
    <property type="project" value="GO_Central"/>
</dbReference>
<dbReference type="GO" id="GO:0045765">
    <property type="term" value="P:regulation of angiogenesis"/>
    <property type="evidence" value="ECO:0000318"/>
    <property type="project" value="GO_Central"/>
</dbReference>
<dbReference type="GO" id="GO:0034315">
    <property type="term" value="P:regulation of Arp2/3 complex-mediated actin nucleation"/>
    <property type="evidence" value="ECO:0000318"/>
    <property type="project" value="GO_Central"/>
</dbReference>
<dbReference type="GO" id="GO:0036416">
    <property type="term" value="P:tRNA stabilization"/>
    <property type="evidence" value="ECO:0007669"/>
    <property type="project" value="Ensembl"/>
</dbReference>
<dbReference type="CDD" id="cd00116">
    <property type="entry name" value="LRR_RI"/>
    <property type="match status" value="1"/>
</dbReference>
<dbReference type="FunFam" id="3.80.10.10:FF:000440">
    <property type="entry name" value="Ribonuclease inhibitor"/>
    <property type="match status" value="1"/>
</dbReference>
<dbReference type="Gene3D" id="3.80.10.10">
    <property type="entry name" value="Ribonuclease Inhibitor"/>
    <property type="match status" value="1"/>
</dbReference>
<dbReference type="InterPro" id="IPR001611">
    <property type="entry name" value="Leu-rich_rpt"/>
</dbReference>
<dbReference type="InterPro" id="IPR006553">
    <property type="entry name" value="Leu-rich_rpt_Cys-con_subtyp"/>
</dbReference>
<dbReference type="InterPro" id="IPR032675">
    <property type="entry name" value="LRR_dom_sf"/>
</dbReference>
<dbReference type="InterPro" id="IPR041302">
    <property type="entry name" value="LRR_RI_cap"/>
</dbReference>
<dbReference type="InterPro" id="IPR050637">
    <property type="entry name" value="NLRP_innate_immun_reg"/>
</dbReference>
<dbReference type="PANTHER" id="PTHR45690">
    <property type="entry name" value="NACHT, LRR AND PYD DOMAINS-CONTAINING PROTEIN 12"/>
    <property type="match status" value="1"/>
</dbReference>
<dbReference type="PANTHER" id="PTHR45690:SF19">
    <property type="entry name" value="NACHT, LRR AND PYD DOMAINS-CONTAINING PROTEIN 3"/>
    <property type="match status" value="1"/>
</dbReference>
<dbReference type="Pfam" id="PF13516">
    <property type="entry name" value="LRR_6"/>
    <property type="match status" value="6"/>
</dbReference>
<dbReference type="Pfam" id="PF18779">
    <property type="entry name" value="LRR_RI_capping"/>
    <property type="match status" value="1"/>
</dbReference>
<dbReference type="SMART" id="SM00367">
    <property type="entry name" value="LRR_CC"/>
    <property type="match status" value="5"/>
</dbReference>
<dbReference type="SMART" id="SM00368">
    <property type="entry name" value="LRR_RI"/>
    <property type="match status" value="13"/>
</dbReference>
<dbReference type="SUPFAM" id="SSF52047">
    <property type="entry name" value="RNI-like"/>
    <property type="match status" value="2"/>
</dbReference>
<evidence type="ECO:0000250" key="1">
    <source>
        <dbReference type="UniProtKB" id="P13489"/>
    </source>
</evidence>
<proteinExistence type="evidence at transcript level"/>
<name>RINI_PANTR</name>
<feature type="initiator methionine" description="Removed" evidence="1">
    <location>
        <position position="1"/>
    </location>
</feature>
<feature type="chain" id="PRO_0000097345" description="Ribonuclease inhibitor">
    <location>
        <begin position="2"/>
        <end position="461"/>
    </location>
</feature>
<feature type="repeat" description="LRR 1">
    <location>
        <begin position="20"/>
        <end position="48"/>
    </location>
</feature>
<feature type="repeat" description="LRR 2">
    <location>
        <begin position="49"/>
        <end position="76"/>
    </location>
</feature>
<feature type="repeat" description="LRR 3">
    <location>
        <begin position="77"/>
        <end position="105"/>
    </location>
</feature>
<feature type="repeat" description="LRR 4">
    <location>
        <begin position="106"/>
        <end position="133"/>
    </location>
</feature>
<feature type="repeat" description="LRR 5">
    <location>
        <begin position="134"/>
        <end position="162"/>
    </location>
</feature>
<feature type="repeat" description="LRR 6">
    <location>
        <begin position="163"/>
        <end position="190"/>
    </location>
</feature>
<feature type="repeat" description="LRR 7">
    <location>
        <begin position="191"/>
        <end position="219"/>
    </location>
</feature>
<feature type="repeat" description="LRR 8">
    <location>
        <begin position="220"/>
        <end position="247"/>
    </location>
</feature>
<feature type="repeat" description="LRR 9">
    <location>
        <begin position="248"/>
        <end position="276"/>
    </location>
</feature>
<feature type="repeat" description="LRR 10">
    <location>
        <begin position="277"/>
        <end position="304"/>
    </location>
</feature>
<feature type="repeat" description="LRR 11">
    <location>
        <begin position="305"/>
        <end position="333"/>
    </location>
</feature>
<feature type="repeat" description="LRR 12">
    <location>
        <begin position="334"/>
        <end position="361"/>
    </location>
</feature>
<feature type="repeat" description="LRR 13">
    <location>
        <begin position="362"/>
        <end position="390"/>
    </location>
</feature>
<feature type="repeat" description="LRR 14">
    <location>
        <begin position="391"/>
        <end position="418"/>
    </location>
</feature>
<feature type="repeat" description="LRR 15">
    <location>
        <begin position="419"/>
        <end position="447"/>
    </location>
</feature>
<feature type="region of interest" description="2 X 5 AA tandem repeats of S-L-D-I-Q">
    <location>
        <begin position="2"/>
        <end position="11"/>
    </location>
</feature>
<feature type="modified residue" description="N-acetylserine" evidence="1">
    <location>
        <position position="2"/>
    </location>
</feature>
<feature type="modified residue" description="Phosphoserine" evidence="1">
    <location>
        <position position="91"/>
    </location>
</feature>
<comment type="function">
    <text evidence="1">Ribonuclease inhibitor which inhibits RNASE1, RNASE2 and angiogenin (ANG). May play a role in redox homeostasis. Required to inhibit the cytotoxic tRNA ribonuclease activity of ANG in the cytoplasm in absence of stress. Relocates to the nucleus in response to stress, relieving inhibition of ANG in the cytoplasm, and inhibiting the angiogenic activity of ANG in the nucleus.</text>
</comment>
<comment type="subunit">
    <text evidence="1">Forms high-affinity heterodimers with RNASE1, ANG and RNASE2.</text>
</comment>
<comment type="subcellular location">
    <subcellularLocation>
        <location evidence="1">Cytoplasm</location>
    </subcellularLocation>
    <subcellularLocation>
        <location evidence="1">Nucleus</location>
    </subcellularLocation>
    <text evidence="1">Localizes in the cytoplasm in absence of stress; translocates to the nucleus in response to stress.</text>
</comment>
<comment type="domain">
    <text evidence="1">The LRR domain forms a horseshoe-shaped structure that interacts tightly with target RNases via a large protein interaction surface on its interior side.</text>
</comment>
<gene>
    <name type="primary">RNH1</name>
    <name type="synonym">RNH</name>
</gene>
<organism>
    <name type="scientific">Pan troglodytes</name>
    <name type="common">Chimpanzee</name>
    <dbReference type="NCBI Taxonomy" id="9598"/>
    <lineage>
        <taxon>Eukaryota</taxon>
        <taxon>Metazoa</taxon>
        <taxon>Chordata</taxon>
        <taxon>Craniata</taxon>
        <taxon>Vertebrata</taxon>
        <taxon>Euteleostomi</taxon>
        <taxon>Mammalia</taxon>
        <taxon>Eutheria</taxon>
        <taxon>Euarchontoglires</taxon>
        <taxon>Primates</taxon>
        <taxon>Haplorrhini</taxon>
        <taxon>Catarrhini</taxon>
        <taxon>Hominidae</taxon>
        <taxon>Pan</taxon>
    </lineage>
</organism>
<protein>
    <recommendedName>
        <fullName>Ribonuclease inhibitor</fullName>
    </recommendedName>
    <alternativeName>
        <fullName>Ribonuclease/angiogenin inhibitor 1</fullName>
    </alternativeName>
</protein>
<sequence>MSLDIQSLDIQCEELSDARWAELLPLLQQCQVVRLDDCGLTEARCKDISSALRVNPALAELNLRSNELGDVGVHCVLQGLQSPSCKIQKLSLQNCCLTGAGCGVLSSTLRTLPTLQELHLSDNLLGDAGLQLLCEGLLDPQCRLEKLQLEYCNLSAASCKPLASVLRAKPDFKELTVSNNDINEAGVRVLCQGLKDSPCQLEALKLESCGVTSDNCRDLCGIVASKASLRELALGSNKLGDVGMAELCPGLLHPSSRLRTLWIWECGITAKGCGDLCRVLRAKESLKELSLAGNELGDEGARLLCETLLEPGCQLESLWVKSCSFTAACCSHFSSVLAQNKFLLELQISNNRLEDAGVQELCQGLGQPGSVLRVLWLADCDVSDSSCSSLAATLLANHSLRELDLSNNCLGDAGILQLVESVRQPGCLLEQLVLYDIYWSEEMEDRLQALEKDKPSLRVIS</sequence>
<keyword id="KW-0007">Acetylation</keyword>
<keyword id="KW-0963">Cytoplasm</keyword>
<keyword id="KW-0433">Leucine-rich repeat</keyword>
<keyword id="KW-0539">Nucleus</keyword>
<keyword id="KW-0597">Phosphoprotein</keyword>
<keyword id="KW-1185">Reference proteome</keyword>
<keyword id="KW-0677">Repeat</keyword>
<reference key="1">
    <citation type="journal article" date="2002" name="Genetics">
        <title>Accelerated protein evolution and origins of human-specific features: Foxp2 as an example.</title>
        <authorList>
            <person name="Zhang J."/>
            <person name="Webb D.M."/>
            <person name="Podlaha O."/>
        </authorList>
    </citation>
    <scope>NUCLEOTIDE SEQUENCE [MRNA]</scope>
</reference>
<accession>Q8HZP9</accession>